<feature type="chain" id="PRO_1000087063" description="Large ribosomal subunit protein uL6">
    <location>
        <begin position="1"/>
        <end position="180"/>
    </location>
</feature>
<accession>A4XBN1</accession>
<organism>
    <name type="scientific">Salinispora tropica (strain ATCC BAA-916 / DSM 44818 / JCM 13857 / NBRC 105044 / CNB-440)</name>
    <dbReference type="NCBI Taxonomy" id="369723"/>
    <lineage>
        <taxon>Bacteria</taxon>
        <taxon>Bacillati</taxon>
        <taxon>Actinomycetota</taxon>
        <taxon>Actinomycetes</taxon>
        <taxon>Micromonosporales</taxon>
        <taxon>Micromonosporaceae</taxon>
        <taxon>Salinispora</taxon>
    </lineage>
</organism>
<proteinExistence type="inferred from homology"/>
<name>RL6_SALTO</name>
<comment type="function">
    <text evidence="1">This protein binds to the 23S rRNA, and is important in its secondary structure. It is located near the subunit interface in the base of the L7/L12 stalk, and near the tRNA binding site of the peptidyltransferase center.</text>
</comment>
<comment type="subunit">
    <text evidence="1">Part of the 50S ribosomal subunit.</text>
</comment>
<comment type="similarity">
    <text evidence="1">Belongs to the universal ribosomal protein uL6 family.</text>
</comment>
<sequence length="180" mass="19331">MSRIGRKSIPVPTGVDVTIAGQTVTVKGPKGELSHTIAEPITIDRAEDGQLNVARPNDERKAKELHGLSRTLVANMIVGVTEGYRKSLEIAGTGYRVTAKGKDLEFALGFSHPVTVVAPEGITFSVEKPTLFHVAGINKQLVGEVAANIRKIRPPEPYKGKGVKYQGEVIRRKAGKAGKK</sequence>
<dbReference type="EMBL" id="CP000667">
    <property type="protein sequence ID" value="ABP56338.1"/>
    <property type="molecule type" value="Genomic_DNA"/>
</dbReference>
<dbReference type="RefSeq" id="WP_012015113.1">
    <property type="nucleotide sequence ID" value="NC_009380.1"/>
</dbReference>
<dbReference type="SMR" id="A4XBN1"/>
<dbReference type="STRING" id="369723.Strop_3908"/>
<dbReference type="KEGG" id="stp:Strop_3908"/>
<dbReference type="PATRIC" id="fig|369723.5.peg.4034"/>
<dbReference type="eggNOG" id="COG0097">
    <property type="taxonomic scope" value="Bacteria"/>
</dbReference>
<dbReference type="HOGENOM" id="CLU_065464_1_2_11"/>
<dbReference type="Proteomes" id="UP000000235">
    <property type="component" value="Chromosome"/>
</dbReference>
<dbReference type="GO" id="GO:0022625">
    <property type="term" value="C:cytosolic large ribosomal subunit"/>
    <property type="evidence" value="ECO:0007669"/>
    <property type="project" value="TreeGrafter"/>
</dbReference>
<dbReference type="GO" id="GO:0019843">
    <property type="term" value="F:rRNA binding"/>
    <property type="evidence" value="ECO:0007669"/>
    <property type="project" value="UniProtKB-UniRule"/>
</dbReference>
<dbReference type="GO" id="GO:0003735">
    <property type="term" value="F:structural constituent of ribosome"/>
    <property type="evidence" value="ECO:0007669"/>
    <property type="project" value="InterPro"/>
</dbReference>
<dbReference type="GO" id="GO:0002181">
    <property type="term" value="P:cytoplasmic translation"/>
    <property type="evidence" value="ECO:0007669"/>
    <property type="project" value="TreeGrafter"/>
</dbReference>
<dbReference type="FunFam" id="3.90.930.12:FF:000001">
    <property type="entry name" value="50S ribosomal protein L6"/>
    <property type="match status" value="1"/>
</dbReference>
<dbReference type="FunFam" id="3.90.930.12:FF:000002">
    <property type="entry name" value="50S ribosomal protein L6"/>
    <property type="match status" value="1"/>
</dbReference>
<dbReference type="Gene3D" id="3.90.930.12">
    <property type="entry name" value="Ribosomal protein L6, alpha-beta domain"/>
    <property type="match status" value="2"/>
</dbReference>
<dbReference type="HAMAP" id="MF_01365_B">
    <property type="entry name" value="Ribosomal_uL6_B"/>
    <property type="match status" value="1"/>
</dbReference>
<dbReference type="InterPro" id="IPR000702">
    <property type="entry name" value="Ribosomal_uL6-like"/>
</dbReference>
<dbReference type="InterPro" id="IPR036789">
    <property type="entry name" value="Ribosomal_uL6-like_a/b-dom_sf"/>
</dbReference>
<dbReference type="InterPro" id="IPR020040">
    <property type="entry name" value="Ribosomal_uL6_a/b-dom"/>
</dbReference>
<dbReference type="InterPro" id="IPR019906">
    <property type="entry name" value="Ribosomal_uL6_bac-type"/>
</dbReference>
<dbReference type="InterPro" id="IPR002358">
    <property type="entry name" value="Ribosomal_uL6_CS"/>
</dbReference>
<dbReference type="NCBIfam" id="TIGR03654">
    <property type="entry name" value="L6_bact"/>
    <property type="match status" value="1"/>
</dbReference>
<dbReference type="PANTHER" id="PTHR11655">
    <property type="entry name" value="60S/50S RIBOSOMAL PROTEIN L6/L9"/>
    <property type="match status" value="1"/>
</dbReference>
<dbReference type="PANTHER" id="PTHR11655:SF14">
    <property type="entry name" value="LARGE RIBOSOMAL SUBUNIT PROTEIN UL6M"/>
    <property type="match status" value="1"/>
</dbReference>
<dbReference type="Pfam" id="PF00347">
    <property type="entry name" value="Ribosomal_L6"/>
    <property type="match status" value="2"/>
</dbReference>
<dbReference type="PIRSF" id="PIRSF002162">
    <property type="entry name" value="Ribosomal_L6"/>
    <property type="match status" value="1"/>
</dbReference>
<dbReference type="PRINTS" id="PR00059">
    <property type="entry name" value="RIBOSOMALL6"/>
</dbReference>
<dbReference type="SUPFAM" id="SSF56053">
    <property type="entry name" value="Ribosomal protein L6"/>
    <property type="match status" value="2"/>
</dbReference>
<dbReference type="PROSITE" id="PS00525">
    <property type="entry name" value="RIBOSOMAL_L6_1"/>
    <property type="match status" value="1"/>
</dbReference>
<evidence type="ECO:0000255" key="1">
    <source>
        <dbReference type="HAMAP-Rule" id="MF_01365"/>
    </source>
</evidence>
<evidence type="ECO:0000305" key="2"/>
<gene>
    <name evidence="1" type="primary">rplF</name>
    <name type="ordered locus">Strop_3908</name>
</gene>
<reference key="1">
    <citation type="journal article" date="2007" name="Proc. Natl. Acad. Sci. U.S.A.">
        <title>Genome sequencing reveals complex secondary metabolome in the marine actinomycete Salinispora tropica.</title>
        <authorList>
            <person name="Udwary D.W."/>
            <person name="Zeigler L."/>
            <person name="Asolkar R.N."/>
            <person name="Singan V."/>
            <person name="Lapidus A."/>
            <person name="Fenical W."/>
            <person name="Jensen P.R."/>
            <person name="Moore B.S."/>
        </authorList>
    </citation>
    <scope>NUCLEOTIDE SEQUENCE [LARGE SCALE GENOMIC DNA]</scope>
    <source>
        <strain>ATCC BAA-916 / DSM 44818 / JCM 13857 / NBRC 105044 / CNB-440</strain>
    </source>
</reference>
<keyword id="KW-1185">Reference proteome</keyword>
<keyword id="KW-0687">Ribonucleoprotein</keyword>
<keyword id="KW-0689">Ribosomal protein</keyword>
<keyword id="KW-0694">RNA-binding</keyword>
<keyword id="KW-0699">rRNA-binding</keyword>
<protein>
    <recommendedName>
        <fullName evidence="1">Large ribosomal subunit protein uL6</fullName>
    </recommendedName>
    <alternativeName>
        <fullName evidence="2">50S ribosomal protein L6</fullName>
    </alternativeName>
</protein>